<accession>B7GNC9</accession>
<accession>E8MN73</accession>
<dbReference type="EMBL" id="CP001095">
    <property type="protein sequence ID" value="ACJ53285.1"/>
    <property type="molecule type" value="Genomic_DNA"/>
</dbReference>
<dbReference type="EMBL" id="AP010889">
    <property type="protein sequence ID" value="BAJ69876.1"/>
    <property type="molecule type" value="Genomic_DNA"/>
</dbReference>
<dbReference type="RefSeq" id="WP_007053803.1">
    <property type="nucleotide sequence ID" value="NZ_JDTT01000039.1"/>
</dbReference>
<dbReference type="SMR" id="B7GNC9"/>
<dbReference type="GeneID" id="69578886"/>
<dbReference type="KEGG" id="bln:Blon_2226"/>
<dbReference type="KEGG" id="blon:BLIJ_2299"/>
<dbReference type="PATRIC" id="fig|391904.8.peg.2301"/>
<dbReference type="HOGENOM" id="CLU_093315_2_0_11"/>
<dbReference type="Proteomes" id="UP000001360">
    <property type="component" value="Chromosome"/>
</dbReference>
<dbReference type="GO" id="GO:1990904">
    <property type="term" value="C:ribonucleoprotein complex"/>
    <property type="evidence" value="ECO:0007669"/>
    <property type="project" value="UniProtKB-KW"/>
</dbReference>
<dbReference type="GO" id="GO:0005840">
    <property type="term" value="C:ribosome"/>
    <property type="evidence" value="ECO:0007669"/>
    <property type="project" value="UniProtKB-KW"/>
</dbReference>
<dbReference type="GO" id="GO:0019843">
    <property type="term" value="F:rRNA binding"/>
    <property type="evidence" value="ECO:0007669"/>
    <property type="project" value="UniProtKB-UniRule"/>
</dbReference>
<dbReference type="GO" id="GO:0003735">
    <property type="term" value="F:structural constituent of ribosome"/>
    <property type="evidence" value="ECO:0007669"/>
    <property type="project" value="InterPro"/>
</dbReference>
<dbReference type="GO" id="GO:0006412">
    <property type="term" value="P:translation"/>
    <property type="evidence" value="ECO:0007669"/>
    <property type="project" value="UniProtKB-UniRule"/>
</dbReference>
<dbReference type="CDD" id="cd06089">
    <property type="entry name" value="KOW_RPL26"/>
    <property type="match status" value="1"/>
</dbReference>
<dbReference type="Gene3D" id="2.30.30.30">
    <property type="match status" value="1"/>
</dbReference>
<dbReference type="HAMAP" id="MF_01326_B">
    <property type="entry name" value="Ribosomal_uL24_B"/>
    <property type="match status" value="1"/>
</dbReference>
<dbReference type="InterPro" id="IPR005824">
    <property type="entry name" value="KOW"/>
</dbReference>
<dbReference type="InterPro" id="IPR014722">
    <property type="entry name" value="Rib_uL2_dom2"/>
</dbReference>
<dbReference type="InterPro" id="IPR003256">
    <property type="entry name" value="Ribosomal_uL24"/>
</dbReference>
<dbReference type="InterPro" id="IPR005825">
    <property type="entry name" value="Ribosomal_uL24_CS"/>
</dbReference>
<dbReference type="InterPro" id="IPR041988">
    <property type="entry name" value="Ribosomal_uL24_KOW"/>
</dbReference>
<dbReference type="InterPro" id="IPR008991">
    <property type="entry name" value="Translation_prot_SH3-like_sf"/>
</dbReference>
<dbReference type="NCBIfam" id="TIGR01079">
    <property type="entry name" value="rplX_bact"/>
    <property type="match status" value="1"/>
</dbReference>
<dbReference type="PANTHER" id="PTHR12903">
    <property type="entry name" value="MITOCHONDRIAL RIBOSOMAL PROTEIN L24"/>
    <property type="match status" value="1"/>
</dbReference>
<dbReference type="Pfam" id="PF00467">
    <property type="entry name" value="KOW"/>
    <property type="match status" value="1"/>
</dbReference>
<dbReference type="Pfam" id="PF17136">
    <property type="entry name" value="ribosomal_L24"/>
    <property type="match status" value="1"/>
</dbReference>
<dbReference type="SMART" id="SM00739">
    <property type="entry name" value="KOW"/>
    <property type="match status" value="1"/>
</dbReference>
<dbReference type="SUPFAM" id="SSF50104">
    <property type="entry name" value="Translation proteins SH3-like domain"/>
    <property type="match status" value="1"/>
</dbReference>
<dbReference type="PROSITE" id="PS01108">
    <property type="entry name" value="RIBOSOMAL_L24"/>
    <property type="match status" value="1"/>
</dbReference>
<protein>
    <recommendedName>
        <fullName evidence="1">Large ribosomal subunit protein uL24</fullName>
    </recommendedName>
    <alternativeName>
        <fullName evidence="2">50S ribosomal protein L24</fullName>
    </alternativeName>
</protein>
<comment type="function">
    <text evidence="1">One of two assembly initiator proteins, it binds directly to the 5'-end of the 23S rRNA, where it nucleates assembly of the 50S subunit.</text>
</comment>
<comment type="function">
    <text evidence="1">One of the proteins that surrounds the polypeptide exit tunnel on the outside of the subunit.</text>
</comment>
<comment type="subunit">
    <text evidence="1">Part of the 50S ribosomal subunit.</text>
</comment>
<comment type="similarity">
    <text evidence="1">Belongs to the universal ribosomal protein uL24 family.</text>
</comment>
<proteinExistence type="inferred from homology"/>
<organism>
    <name type="scientific">Bifidobacterium longum subsp. infantis (strain ATCC 15697 / DSM 20088 / JCM 1222 / NCTC 11817 / S12)</name>
    <dbReference type="NCBI Taxonomy" id="391904"/>
    <lineage>
        <taxon>Bacteria</taxon>
        <taxon>Bacillati</taxon>
        <taxon>Actinomycetota</taxon>
        <taxon>Actinomycetes</taxon>
        <taxon>Bifidobacteriales</taxon>
        <taxon>Bifidobacteriaceae</taxon>
        <taxon>Bifidobacterium</taxon>
    </lineage>
</organism>
<gene>
    <name evidence="1" type="primary">rplX</name>
    <name type="ordered locus">Blon_2226</name>
    <name type="ordered locus">BLIJ_2299</name>
</gene>
<keyword id="KW-0687">Ribonucleoprotein</keyword>
<keyword id="KW-0689">Ribosomal protein</keyword>
<keyword id="KW-0694">RNA-binding</keyword>
<keyword id="KW-0699">rRNA-binding</keyword>
<sequence>MAAKIKSGDLVKVIRGKDRGKEGTVKQVLSNDRLIVEGVQIVKKHVRATQQGQQAGIVSTEAPIHRSNVMVIDPETKQPTRVGITVKEEARDGKVKTVRVRVAKKSGKELA</sequence>
<feature type="chain" id="PRO_1000165928" description="Large ribosomal subunit protein uL24">
    <location>
        <begin position="1"/>
        <end position="111"/>
    </location>
</feature>
<name>RL24_BIFLS</name>
<reference key="1">
    <citation type="journal article" date="2008" name="Proc. Natl. Acad. Sci. U.S.A.">
        <title>The genome sequence of Bifidobacterium longum subsp. infantis reveals adaptations for milk utilization within the infant microbiome.</title>
        <authorList>
            <person name="Sela D.A."/>
            <person name="Chapman J."/>
            <person name="Adeuya A."/>
            <person name="Kim J.H."/>
            <person name="Chen F."/>
            <person name="Whitehead T.R."/>
            <person name="Lapidus A."/>
            <person name="Rokhsar D.S."/>
            <person name="Lebrilla C.B."/>
            <person name="German J.B."/>
            <person name="Price N.P."/>
            <person name="Richardson P.M."/>
            <person name="Mills D.A."/>
        </authorList>
    </citation>
    <scope>NUCLEOTIDE SEQUENCE [LARGE SCALE GENOMIC DNA]</scope>
    <source>
        <strain>ATCC 15697 / DSM 20088 / JCM 1222 / NCTC 11817 / S12</strain>
    </source>
</reference>
<reference key="2">
    <citation type="journal article" date="2011" name="Nature">
        <title>Bifidobacteria can protect from enteropathogenic infection through production of acetate.</title>
        <authorList>
            <person name="Fukuda S."/>
            <person name="Toh H."/>
            <person name="Hase K."/>
            <person name="Oshima K."/>
            <person name="Nakanishi Y."/>
            <person name="Yoshimura K."/>
            <person name="Tobe T."/>
            <person name="Clarke J.M."/>
            <person name="Topping D.L."/>
            <person name="Suzuki T."/>
            <person name="Taylor T.D."/>
            <person name="Itoh K."/>
            <person name="Kikuchi J."/>
            <person name="Morita H."/>
            <person name="Hattori M."/>
            <person name="Ohno H."/>
        </authorList>
    </citation>
    <scope>NUCLEOTIDE SEQUENCE [LARGE SCALE GENOMIC DNA]</scope>
    <source>
        <strain>ATCC 15697 / DSM 20088 / JCM 1222 / NCTC 11817 / S12</strain>
    </source>
</reference>
<evidence type="ECO:0000255" key="1">
    <source>
        <dbReference type="HAMAP-Rule" id="MF_01326"/>
    </source>
</evidence>
<evidence type="ECO:0000305" key="2"/>